<feature type="chain" id="PRO_1000007630" description="Large ribosomal subunit protein uL29">
    <location>
        <begin position="1"/>
        <end position="68"/>
    </location>
</feature>
<evidence type="ECO:0000255" key="1">
    <source>
        <dbReference type="HAMAP-Rule" id="MF_00374"/>
    </source>
</evidence>
<evidence type="ECO:0000305" key="2"/>
<accession>A4VYQ1</accession>
<sequence>MKLQEIKDFVKELRGLSQEELAKKENELKKELFELRFQAAAGQLEQTARLNEVKKQIARIKTVQSETK</sequence>
<gene>
    <name evidence="1" type="primary">rpmC</name>
    <name type="ordered locus">SSU98_0080</name>
</gene>
<keyword id="KW-0687">Ribonucleoprotein</keyword>
<keyword id="KW-0689">Ribosomal protein</keyword>
<organism>
    <name type="scientific">Streptococcus suis (strain 98HAH33)</name>
    <dbReference type="NCBI Taxonomy" id="391296"/>
    <lineage>
        <taxon>Bacteria</taxon>
        <taxon>Bacillati</taxon>
        <taxon>Bacillota</taxon>
        <taxon>Bacilli</taxon>
        <taxon>Lactobacillales</taxon>
        <taxon>Streptococcaceae</taxon>
        <taxon>Streptococcus</taxon>
    </lineage>
</organism>
<reference key="1">
    <citation type="journal article" date="2007" name="PLoS ONE">
        <title>A glimpse of streptococcal toxic shock syndrome from comparative genomics of S. suis 2 Chinese isolates.</title>
        <authorList>
            <person name="Chen C."/>
            <person name="Tang J."/>
            <person name="Dong W."/>
            <person name="Wang C."/>
            <person name="Feng Y."/>
            <person name="Wang J."/>
            <person name="Zheng F."/>
            <person name="Pan X."/>
            <person name="Liu D."/>
            <person name="Li M."/>
            <person name="Song Y."/>
            <person name="Zhu X."/>
            <person name="Sun H."/>
            <person name="Feng T."/>
            <person name="Guo Z."/>
            <person name="Ju A."/>
            <person name="Ge J."/>
            <person name="Dong Y."/>
            <person name="Sun W."/>
            <person name="Jiang Y."/>
            <person name="Wang J."/>
            <person name="Yan J."/>
            <person name="Yang H."/>
            <person name="Wang X."/>
            <person name="Gao G.F."/>
            <person name="Yang R."/>
            <person name="Wang J."/>
            <person name="Yu J."/>
        </authorList>
    </citation>
    <scope>NUCLEOTIDE SEQUENCE [LARGE SCALE GENOMIC DNA]</scope>
    <source>
        <strain>98HAH33</strain>
    </source>
</reference>
<proteinExistence type="inferred from homology"/>
<name>RL29_STRS2</name>
<comment type="similarity">
    <text evidence="1">Belongs to the universal ribosomal protein uL29 family.</text>
</comment>
<dbReference type="EMBL" id="CP000408">
    <property type="protein sequence ID" value="ABP91240.1"/>
    <property type="molecule type" value="Genomic_DNA"/>
</dbReference>
<dbReference type="SMR" id="A4VYQ1"/>
<dbReference type="KEGG" id="ssv:SSU98_0080"/>
<dbReference type="HOGENOM" id="CLU_158491_5_2_9"/>
<dbReference type="GO" id="GO:0022625">
    <property type="term" value="C:cytosolic large ribosomal subunit"/>
    <property type="evidence" value="ECO:0007669"/>
    <property type="project" value="TreeGrafter"/>
</dbReference>
<dbReference type="GO" id="GO:0003735">
    <property type="term" value="F:structural constituent of ribosome"/>
    <property type="evidence" value="ECO:0007669"/>
    <property type="project" value="InterPro"/>
</dbReference>
<dbReference type="GO" id="GO:0006412">
    <property type="term" value="P:translation"/>
    <property type="evidence" value="ECO:0007669"/>
    <property type="project" value="UniProtKB-UniRule"/>
</dbReference>
<dbReference type="CDD" id="cd00427">
    <property type="entry name" value="Ribosomal_L29_HIP"/>
    <property type="match status" value="1"/>
</dbReference>
<dbReference type="FunFam" id="1.10.287.310:FF:000001">
    <property type="entry name" value="50S ribosomal protein L29"/>
    <property type="match status" value="1"/>
</dbReference>
<dbReference type="Gene3D" id="1.10.287.310">
    <property type="match status" value="1"/>
</dbReference>
<dbReference type="HAMAP" id="MF_00374">
    <property type="entry name" value="Ribosomal_uL29"/>
    <property type="match status" value="1"/>
</dbReference>
<dbReference type="InterPro" id="IPR050063">
    <property type="entry name" value="Ribosomal_protein_uL29"/>
</dbReference>
<dbReference type="InterPro" id="IPR001854">
    <property type="entry name" value="Ribosomal_uL29"/>
</dbReference>
<dbReference type="InterPro" id="IPR018254">
    <property type="entry name" value="Ribosomal_uL29_CS"/>
</dbReference>
<dbReference type="InterPro" id="IPR036049">
    <property type="entry name" value="Ribosomal_uL29_sf"/>
</dbReference>
<dbReference type="NCBIfam" id="TIGR00012">
    <property type="entry name" value="L29"/>
    <property type="match status" value="1"/>
</dbReference>
<dbReference type="PANTHER" id="PTHR10916">
    <property type="entry name" value="60S RIBOSOMAL PROTEIN L35/50S RIBOSOMAL PROTEIN L29"/>
    <property type="match status" value="1"/>
</dbReference>
<dbReference type="PANTHER" id="PTHR10916:SF0">
    <property type="entry name" value="LARGE RIBOSOMAL SUBUNIT PROTEIN UL29C"/>
    <property type="match status" value="1"/>
</dbReference>
<dbReference type="Pfam" id="PF00831">
    <property type="entry name" value="Ribosomal_L29"/>
    <property type="match status" value="1"/>
</dbReference>
<dbReference type="SUPFAM" id="SSF46561">
    <property type="entry name" value="Ribosomal protein L29 (L29p)"/>
    <property type="match status" value="1"/>
</dbReference>
<dbReference type="PROSITE" id="PS00579">
    <property type="entry name" value="RIBOSOMAL_L29"/>
    <property type="match status" value="1"/>
</dbReference>
<protein>
    <recommendedName>
        <fullName evidence="1">Large ribosomal subunit protein uL29</fullName>
    </recommendedName>
    <alternativeName>
        <fullName evidence="2">50S ribosomal protein L29</fullName>
    </alternativeName>
</protein>